<proteinExistence type="inferred from homology"/>
<gene>
    <name evidence="1" type="primary">atpE</name>
    <name evidence="1" type="synonym">atpH</name>
</gene>
<keyword id="KW-0066">ATP synthesis</keyword>
<keyword id="KW-0138">CF(0)</keyword>
<keyword id="KW-0375">Hydrogen ion transport</keyword>
<keyword id="KW-0406">Ion transport</keyword>
<keyword id="KW-0446">Lipid-binding</keyword>
<keyword id="KW-0472">Membrane</keyword>
<keyword id="KW-0934">Plastid</keyword>
<keyword id="KW-0812">Transmembrane</keyword>
<keyword id="KW-1133">Transmembrane helix</keyword>
<keyword id="KW-0813">Transport</keyword>
<feature type="chain" id="PRO_0000362907" description="ATP synthase subunit C, plastid">
    <location>
        <begin position="1"/>
        <end position="81"/>
    </location>
</feature>
<feature type="transmembrane region" description="Helical" evidence="1">
    <location>
        <begin position="3"/>
        <end position="23"/>
    </location>
</feature>
<feature type="transmembrane region" description="Helical" evidence="1">
    <location>
        <begin position="57"/>
        <end position="77"/>
    </location>
</feature>
<feature type="site" description="Reversibly protonated during proton transport" evidence="1">
    <location>
        <position position="61"/>
    </location>
</feature>
<protein>
    <recommendedName>
        <fullName>ATP synthase subunit C, plastid</fullName>
    </recommendedName>
    <alternativeName>
        <fullName>ATP synthase F0 sector subunit C</fullName>
    </alternativeName>
    <alternativeName>
        <fullName evidence="1">ATPase subunit III</fullName>
    </alternativeName>
    <alternativeName>
        <fullName evidence="1">Lipid-binding protein</fullName>
    </alternativeName>
</protein>
<evidence type="ECO:0000255" key="1">
    <source>
        <dbReference type="HAMAP-Rule" id="MF_01396"/>
    </source>
</evidence>
<evidence type="ECO:0000305" key="2"/>
<name>ATPH_CUSGR</name>
<organism>
    <name type="scientific">Cuscuta gronovii</name>
    <name type="common">Common dodder</name>
    <name type="synonym">Epithymum gronovii</name>
    <dbReference type="NCBI Taxonomy" id="35886"/>
    <lineage>
        <taxon>Eukaryota</taxon>
        <taxon>Viridiplantae</taxon>
        <taxon>Streptophyta</taxon>
        <taxon>Embryophyta</taxon>
        <taxon>Tracheophyta</taxon>
        <taxon>Spermatophyta</taxon>
        <taxon>Magnoliopsida</taxon>
        <taxon>eudicotyledons</taxon>
        <taxon>Gunneridae</taxon>
        <taxon>Pentapetalae</taxon>
        <taxon>asterids</taxon>
        <taxon>lamiids</taxon>
        <taxon>Solanales</taxon>
        <taxon>Convolvulaceae</taxon>
        <taxon>Cuscuteae</taxon>
        <taxon>Cuscuta</taxon>
        <taxon>Cuscuta subgen. Grammica</taxon>
        <taxon>Cuscuta sect. Oxycarpae</taxon>
    </lineage>
</organism>
<sequence>MNPIISAASVIAAGFAVGLASIGPGIGQGTAAGRAVEGIARQPEAEGKIRGTLLLSLAFMEALTIYGLVVALALLFANPFI</sequence>
<comment type="function">
    <text evidence="1">F(1)F(0) ATP synthase produces ATP from ADP in the presence of a proton or sodium gradient. F-type ATPases consist of two structural domains, F(1) containing the extramembraneous catalytic core and F(0) containing the membrane proton channel, linked together by a central stalk and a peripheral stalk. During catalysis, ATP synthesis in the catalytic domain of F(1) is coupled via a rotary mechanism of the central stalk subunits to proton translocation.</text>
</comment>
<comment type="function">
    <text evidence="1">Key component of the F(0) channel; it plays a direct role in translocation across the membrane. A homomeric c-ring of between 10-14 subunits forms the central stalk rotor element with the F(1) delta and epsilon subunits.</text>
</comment>
<comment type="subunit">
    <text evidence="1">F-type ATPases have 2 components, F(1) - the catalytic core - and F(0) - the membrane proton channel. F(1) has five subunits: alpha(3), beta(3), gamma(1), delta(1), epsilon(1). F(0) has four main subunits: a(1), b(1), b'(1) and c(10-14). The alpha and beta chains form an alternating ring which encloses part of the gamma chain. F(1) is attached to F(0) by a central stalk formed by the gamma and epsilon chains, while a peripheral stalk is formed by the delta, b and b' chains.</text>
</comment>
<comment type="subcellular location">
    <subcellularLocation>
        <location evidence="2">Plastid membrane</location>
        <topology evidence="1">Multi-pass membrane protein</topology>
    </subcellularLocation>
</comment>
<comment type="similarity">
    <text evidence="1">Belongs to the ATPase C chain family.</text>
</comment>
<comment type="caution">
    <text evidence="2">Young tissue from this organism is photosynthetic and contains some thylakoids, although the photosynthetic activity does not exceed the light compensation point.</text>
</comment>
<reference key="1">
    <citation type="journal article" date="2007" name="BMC Plant Biol.">
        <title>Complete DNA sequences of the plastid genomes of two parasitic flowering plant species, Cuscuta reflexa and Cuscuta gronovii.</title>
        <authorList>
            <person name="Funk H.T."/>
            <person name="Berg S."/>
            <person name="Krupinska K."/>
            <person name="Maier U.-G."/>
            <person name="Krause K."/>
        </authorList>
    </citation>
    <scope>NUCLEOTIDE SEQUENCE [LARGE SCALE GENOMIC DNA]</scope>
</reference>
<dbReference type="EMBL" id="AM711639">
    <property type="protein sequence ID" value="CAM98319.1"/>
    <property type="molecule type" value="Genomic_DNA"/>
</dbReference>
<dbReference type="RefSeq" id="YP_001430033.1">
    <property type="nucleotide sequence ID" value="NC_009765.1"/>
</dbReference>
<dbReference type="SMR" id="A7M8Z1"/>
<dbReference type="GeneID" id="5536716"/>
<dbReference type="GO" id="GO:0005886">
    <property type="term" value="C:plasma membrane"/>
    <property type="evidence" value="ECO:0007669"/>
    <property type="project" value="UniProtKB-UniRule"/>
</dbReference>
<dbReference type="GO" id="GO:0042170">
    <property type="term" value="C:plastid membrane"/>
    <property type="evidence" value="ECO:0007669"/>
    <property type="project" value="UniProtKB-SubCell"/>
</dbReference>
<dbReference type="GO" id="GO:0045259">
    <property type="term" value="C:proton-transporting ATP synthase complex"/>
    <property type="evidence" value="ECO:0007669"/>
    <property type="project" value="UniProtKB-KW"/>
</dbReference>
<dbReference type="GO" id="GO:0033177">
    <property type="term" value="C:proton-transporting two-sector ATPase complex, proton-transporting domain"/>
    <property type="evidence" value="ECO:0007669"/>
    <property type="project" value="InterPro"/>
</dbReference>
<dbReference type="GO" id="GO:0008289">
    <property type="term" value="F:lipid binding"/>
    <property type="evidence" value="ECO:0007669"/>
    <property type="project" value="UniProtKB-KW"/>
</dbReference>
<dbReference type="GO" id="GO:0046933">
    <property type="term" value="F:proton-transporting ATP synthase activity, rotational mechanism"/>
    <property type="evidence" value="ECO:0007669"/>
    <property type="project" value="UniProtKB-UniRule"/>
</dbReference>
<dbReference type="CDD" id="cd18183">
    <property type="entry name" value="ATP-synt_Fo_c_ATPH"/>
    <property type="match status" value="1"/>
</dbReference>
<dbReference type="FunFam" id="1.20.20.10:FF:000001">
    <property type="entry name" value="ATP synthase subunit c, chloroplastic"/>
    <property type="match status" value="1"/>
</dbReference>
<dbReference type="Gene3D" id="1.20.20.10">
    <property type="entry name" value="F1F0 ATP synthase subunit C"/>
    <property type="match status" value="1"/>
</dbReference>
<dbReference type="HAMAP" id="MF_01396">
    <property type="entry name" value="ATP_synth_c_bact"/>
    <property type="match status" value="1"/>
</dbReference>
<dbReference type="InterPro" id="IPR005953">
    <property type="entry name" value="ATP_synth_csu_bac/chlpt"/>
</dbReference>
<dbReference type="InterPro" id="IPR000454">
    <property type="entry name" value="ATP_synth_F0_csu"/>
</dbReference>
<dbReference type="InterPro" id="IPR020537">
    <property type="entry name" value="ATP_synth_F0_csu_DDCD_BS"/>
</dbReference>
<dbReference type="InterPro" id="IPR038662">
    <property type="entry name" value="ATP_synth_F0_csu_sf"/>
</dbReference>
<dbReference type="InterPro" id="IPR002379">
    <property type="entry name" value="ATPase_proteolipid_c-like_dom"/>
</dbReference>
<dbReference type="InterPro" id="IPR035921">
    <property type="entry name" value="F/V-ATP_Csub_sf"/>
</dbReference>
<dbReference type="NCBIfam" id="TIGR01260">
    <property type="entry name" value="ATP_synt_c"/>
    <property type="match status" value="1"/>
</dbReference>
<dbReference type="NCBIfam" id="NF005608">
    <property type="entry name" value="PRK07354.1"/>
    <property type="match status" value="1"/>
</dbReference>
<dbReference type="PANTHER" id="PTHR10031">
    <property type="entry name" value="ATP SYNTHASE LIPID-BINDING PROTEIN, MITOCHONDRIAL"/>
    <property type="match status" value="1"/>
</dbReference>
<dbReference type="PANTHER" id="PTHR10031:SF0">
    <property type="entry name" value="ATPASE PROTEIN 9"/>
    <property type="match status" value="1"/>
</dbReference>
<dbReference type="Pfam" id="PF00137">
    <property type="entry name" value="ATP-synt_C"/>
    <property type="match status" value="1"/>
</dbReference>
<dbReference type="PRINTS" id="PR00124">
    <property type="entry name" value="ATPASEC"/>
</dbReference>
<dbReference type="SUPFAM" id="SSF81333">
    <property type="entry name" value="F1F0 ATP synthase subunit C"/>
    <property type="match status" value="1"/>
</dbReference>
<dbReference type="PROSITE" id="PS00605">
    <property type="entry name" value="ATPASE_C"/>
    <property type="match status" value="1"/>
</dbReference>
<accession>A7M8Z1</accession>
<geneLocation type="plastid"/>